<proteinExistence type="inferred from homology"/>
<evidence type="ECO:0000255" key="1">
    <source>
        <dbReference type="HAMAP-Rule" id="MF_00715"/>
    </source>
</evidence>
<dbReference type="EMBL" id="CP000680">
    <property type="protein sequence ID" value="ABP84027.1"/>
    <property type="molecule type" value="Genomic_DNA"/>
</dbReference>
<dbReference type="SMR" id="A4XRR1"/>
<dbReference type="STRING" id="399739.Pmen_1262"/>
<dbReference type="KEGG" id="pmy:Pmen_1262"/>
<dbReference type="PATRIC" id="fig|399739.8.peg.1277"/>
<dbReference type="eggNOG" id="COG2900">
    <property type="taxonomic scope" value="Bacteria"/>
</dbReference>
<dbReference type="HOGENOM" id="CLU_180796_4_1_6"/>
<dbReference type="OrthoDB" id="8606883at2"/>
<dbReference type="Gene3D" id="1.20.5.300">
    <property type="match status" value="1"/>
</dbReference>
<dbReference type="HAMAP" id="MF_00715">
    <property type="entry name" value="SlyX"/>
    <property type="match status" value="1"/>
</dbReference>
<dbReference type="InterPro" id="IPR007236">
    <property type="entry name" value="SlyX"/>
</dbReference>
<dbReference type="NCBIfam" id="NF001421">
    <property type="entry name" value="PRK00295.1"/>
    <property type="match status" value="1"/>
</dbReference>
<dbReference type="PANTHER" id="PTHR36508">
    <property type="entry name" value="PROTEIN SLYX"/>
    <property type="match status" value="1"/>
</dbReference>
<dbReference type="PANTHER" id="PTHR36508:SF1">
    <property type="entry name" value="PROTEIN SLYX"/>
    <property type="match status" value="1"/>
</dbReference>
<dbReference type="Pfam" id="PF04102">
    <property type="entry name" value="SlyX"/>
    <property type="match status" value="1"/>
</dbReference>
<name>SLYX_ECTM1</name>
<sequence>MSLEVRVTELESRLAFQEDTIQALNDELVEQHKRIERLQLQLSALARRQEELQGQVGIVEDEAPPPHY</sequence>
<accession>A4XRR1</accession>
<gene>
    <name evidence="1" type="primary">slyX</name>
    <name type="ordered locus">Pmen_1262</name>
</gene>
<organism>
    <name type="scientific">Ectopseudomonas mendocina (strain ymp)</name>
    <name type="common">Pseudomonas mendocina</name>
    <dbReference type="NCBI Taxonomy" id="399739"/>
    <lineage>
        <taxon>Bacteria</taxon>
        <taxon>Pseudomonadati</taxon>
        <taxon>Pseudomonadota</taxon>
        <taxon>Gammaproteobacteria</taxon>
        <taxon>Pseudomonadales</taxon>
        <taxon>Pseudomonadaceae</taxon>
        <taxon>Ectopseudomonas</taxon>
    </lineage>
</organism>
<reference key="1">
    <citation type="submission" date="2007-04" db="EMBL/GenBank/DDBJ databases">
        <title>Complete sequence of Pseudomonas mendocina ymp.</title>
        <authorList>
            <consortium name="US DOE Joint Genome Institute"/>
            <person name="Copeland A."/>
            <person name="Lucas S."/>
            <person name="Lapidus A."/>
            <person name="Barry K."/>
            <person name="Glavina del Rio T."/>
            <person name="Dalin E."/>
            <person name="Tice H."/>
            <person name="Pitluck S."/>
            <person name="Kiss H."/>
            <person name="Brettin T."/>
            <person name="Detter J.C."/>
            <person name="Bruce D."/>
            <person name="Han C."/>
            <person name="Schmutz J."/>
            <person name="Larimer F."/>
            <person name="Land M."/>
            <person name="Hauser L."/>
            <person name="Kyrpides N."/>
            <person name="Mikhailova N."/>
            <person name="Hersman L."/>
            <person name="Dubois J."/>
            <person name="Maurice P."/>
            <person name="Richardson P."/>
        </authorList>
    </citation>
    <scope>NUCLEOTIDE SEQUENCE [LARGE SCALE GENOMIC DNA]</scope>
    <source>
        <strain>ymp</strain>
    </source>
</reference>
<feature type="chain" id="PRO_1000045727" description="Protein SlyX homolog">
    <location>
        <begin position="1"/>
        <end position="68"/>
    </location>
</feature>
<comment type="similarity">
    <text evidence="1">Belongs to the SlyX family.</text>
</comment>
<protein>
    <recommendedName>
        <fullName evidence="1">Protein SlyX homolog</fullName>
    </recommendedName>
</protein>